<sequence length="397" mass="43719">MYFLLNLVGLIVIMAVVFLCSPQKKKIKWRPIITLIVLELLITWFMLGTKVGSWAIGKIGDFFTWLIACASDGIAFAFPSVMANETVDFFFSALLPIIFIVTFFDILTYFGILPWLIDKIGWVISKASRLPKLESFFSIQMMFLGNTEALAVIRQQLTVLSNNRLLTFGLMSMSSISGSIIGSYLSMVPATYVFTAIPLNCLNALIIANLLNPVHVPEDEDIIYTPPKEEKKDFFSTISNSMLVGMNMVIVILAMVIGYVALTSAVNGILGVFVHGLTIQTIFAYLFSPFAFLLGLPVHDAMYVAQLMGMKLATNEFVAMLDLKNNLKSLPPHTVAVATTFLTSFANFSTVGMIYGTYNSILDGEKSTVIGRNVWKLLVSGIAVSLLSAAIVGLFVW</sequence>
<name>NUPG_BACSU</name>
<protein>
    <recommendedName>
        <fullName>Purine nucleoside transport protein NupG</fullName>
    </recommendedName>
</protein>
<organism>
    <name type="scientific">Bacillus subtilis (strain 168)</name>
    <dbReference type="NCBI Taxonomy" id="224308"/>
    <lineage>
        <taxon>Bacteria</taxon>
        <taxon>Bacillati</taxon>
        <taxon>Bacillota</taxon>
        <taxon>Bacilli</taxon>
        <taxon>Bacillales</taxon>
        <taxon>Bacillaceae</taxon>
        <taxon>Bacillus</taxon>
    </lineage>
</organism>
<evidence type="ECO:0000255" key="1"/>
<evidence type="ECO:0000269" key="2">
    <source>
    </source>
</evidence>
<evidence type="ECO:0000305" key="3"/>
<gene>
    <name type="primary">nupG</name>
    <name type="synonym">yxjA</name>
    <name type="ordered locus">BSU39020</name>
    <name type="ORF">N15HR</name>
</gene>
<accession>P42312</accession>
<reference key="1">
    <citation type="journal article" date="1996" name="Microbiology">
        <title>Sequencing of a 65 kb region of the Bacillus subtilis genome containing the lic and cel loci, and creation of a 177 kb contig covering the gnt-sacXY region.</title>
        <authorList>
            <person name="Yoshida K."/>
            <person name="Shindo K."/>
            <person name="Sano H."/>
            <person name="Seki S."/>
            <person name="Fujimura M."/>
            <person name="Yanai N."/>
            <person name="Miwa Y."/>
            <person name="Fujita Y."/>
        </authorList>
    </citation>
    <scope>NUCLEOTIDE SEQUENCE [GENOMIC DNA]</scope>
    <source>
        <strain>168 / BGSC1A1</strain>
    </source>
</reference>
<reference key="2">
    <citation type="journal article" date="1997" name="Nature">
        <title>The complete genome sequence of the Gram-positive bacterium Bacillus subtilis.</title>
        <authorList>
            <person name="Kunst F."/>
            <person name="Ogasawara N."/>
            <person name="Moszer I."/>
            <person name="Albertini A.M."/>
            <person name="Alloni G."/>
            <person name="Azevedo V."/>
            <person name="Bertero M.G."/>
            <person name="Bessieres P."/>
            <person name="Bolotin A."/>
            <person name="Borchert S."/>
            <person name="Borriss R."/>
            <person name="Boursier L."/>
            <person name="Brans A."/>
            <person name="Braun M."/>
            <person name="Brignell S.C."/>
            <person name="Bron S."/>
            <person name="Brouillet S."/>
            <person name="Bruschi C.V."/>
            <person name="Caldwell B."/>
            <person name="Capuano V."/>
            <person name="Carter N.M."/>
            <person name="Choi S.-K."/>
            <person name="Codani J.-J."/>
            <person name="Connerton I.F."/>
            <person name="Cummings N.J."/>
            <person name="Daniel R.A."/>
            <person name="Denizot F."/>
            <person name="Devine K.M."/>
            <person name="Duesterhoeft A."/>
            <person name="Ehrlich S.D."/>
            <person name="Emmerson P.T."/>
            <person name="Entian K.-D."/>
            <person name="Errington J."/>
            <person name="Fabret C."/>
            <person name="Ferrari E."/>
            <person name="Foulger D."/>
            <person name="Fritz C."/>
            <person name="Fujita M."/>
            <person name="Fujita Y."/>
            <person name="Fuma S."/>
            <person name="Galizzi A."/>
            <person name="Galleron N."/>
            <person name="Ghim S.-Y."/>
            <person name="Glaser P."/>
            <person name="Goffeau A."/>
            <person name="Golightly E.J."/>
            <person name="Grandi G."/>
            <person name="Guiseppi G."/>
            <person name="Guy B.J."/>
            <person name="Haga K."/>
            <person name="Haiech J."/>
            <person name="Harwood C.R."/>
            <person name="Henaut A."/>
            <person name="Hilbert H."/>
            <person name="Holsappel S."/>
            <person name="Hosono S."/>
            <person name="Hullo M.-F."/>
            <person name="Itaya M."/>
            <person name="Jones L.-M."/>
            <person name="Joris B."/>
            <person name="Karamata D."/>
            <person name="Kasahara Y."/>
            <person name="Klaerr-Blanchard M."/>
            <person name="Klein C."/>
            <person name="Kobayashi Y."/>
            <person name="Koetter P."/>
            <person name="Koningstein G."/>
            <person name="Krogh S."/>
            <person name="Kumano M."/>
            <person name="Kurita K."/>
            <person name="Lapidus A."/>
            <person name="Lardinois S."/>
            <person name="Lauber J."/>
            <person name="Lazarevic V."/>
            <person name="Lee S.-M."/>
            <person name="Levine A."/>
            <person name="Liu H."/>
            <person name="Masuda S."/>
            <person name="Mauel C."/>
            <person name="Medigue C."/>
            <person name="Medina N."/>
            <person name="Mellado R.P."/>
            <person name="Mizuno M."/>
            <person name="Moestl D."/>
            <person name="Nakai S."/>
            <person name="Noback M."/>
            <person name="Noone D."/>
            <person name="O'Reilly M."/>
            <person name="Ogawa K."/>
            <person name="Ogiwara A."/>
            <person name="Oudega B."/>
            <person name="Park S.-H."/>
            <person name="Parro V."/>
            <person name="Pohl T.M."/>
            <person name="Portetelle D."/>
            <person name="Porwollik S."/>
            <person name="Prescott A.M."/>
            <person name="Presecan E."/>
            <person name="Pujic P."/>
            <person name="Purnelle B."/>
            <person name="Rapoport G."/>
            <person name="Rey M."/>
            <person name="Reynolds S."/>
            <person name="Rieger M."/>
            <person name="Rivolta C."/>
            <person name="Rocha E."/>
            <person name="Roche B."/>
            <person name="Rose M."/>
            <person name="Sadaie Y."/>
            <person name="Sato T."/>
            <person name="Scanlan E."/>
            <person name="Schleich S."/>
            <person name="Schroeter R."/>
            <person name="Scoffone F."/>
            <person name="Sekiguchi J."/>
            <person name="Sekowska A."/>
            <person name="Seror S.J."/>
            <person name="Serror P."/>
            <person name="Shin B.-S."/>
            <person name="Soldo B."/>
            <person name="Sorokin A."/>
            <person name="Tacconi E."/>
            <person name="Takagi T."/>
            <person name="Takahashi H."/>
            <person name="Takemaru K."/>
            <person name="Takeuchi M."/>
            <person name="Tamakoshi A."/>
            <person name="Tanaka T."/>
            <person name="Terpstra P."/>
            <person name="Tognoni A."/>
            <person name="Tosato V."/>
            <person name="Uchiyama S."/>
            <person name="Vandenbol M."/>
            <person name="Vannier F."/>
            <person name="Vassarotti A."/>
            <person name="Viari A."/>
            <person name="Wambutt R."/>
            <person name="Wedler E."/>
            <person name="Wedler H."/>
            <person name="Weitzenegger T."/>
            <person name="Winters P."/>
            <person name="Wipat A."/>
            <person name="Yamamoto H."/>
            <person name="Yamane K."/>
            <person name="Yasumoto K."/>
            <person name="Yata K."/>
            <person name="Yoshida K."/>
            <person name="Yoshikawa H.-F."/>
            <person name="Zumstein E."/>
            <person name="Yoshikawa H."/>
            <person name="Danchin A."/>
        </authorList>
    </citation>
    <scope>NUCLEOTIDE SEQUENCE [LARGE SCALE GENOMIC DNA]</scope>
    <source>
        <strain>168</strain>
    </source>
</reference>
<reference key="3">
    <citation type="journal article" date="2009" name="Microbiology">
        <title>From a consortium sequence to a unified sequence: the Bacillus subtilis 168 reference genome a decade later.</title>
        <authorList>
            <person name="Barbe V."/>
            <person name="Cruveiller S."/>
            <person name="Kunst F."/>
            <person name="Lenoble P."/>
            <person name="Meurice G."/>
            <person name="Sekowska A."/>
            <person name="Vallenet D."/>
            <person name="Wang T."/>
            <person name="Moszer I."/>
            <person name="Medigue C."/>
            <person name="Danchin A."/>
        </authorList>
    </citation>
    <scope>SEQUENCE REVISION TO 279</scope>
</reference>
<reference key="4">
    <citation type="journal article" date="2003" name="J. Bacteriol.">
        <title>Definition of a second Bacillus subtilis pur regulon comprising the pur and xpt-pbuX operons plus pbuG, nupG (yxjA), and pbuE (ydhL).</title>
        <authorList>
            <person name="Johansen L.E."/>
            <person name="Nygaard P."/>
            <person name="Lassen C."/>
            <person name="Agersoe Y."/>
            <person name="Saxild H.H."/>
        </authorList>
    </citation>
    <scope>FUNCTION IN PURINE NUCLEOSIDE UPTAKE</scope>
    <scope>INDUCTION</scope>
    <source>
        <strain>168</strain>
    </source>
</reference>
<comment type="function">
    <text evidence="2">Involved in the uptake of the purine ribonucleosides inosine and guanosine.</text>
</comment>
<comment type="subcellular location">
    <subcellularLocation>
        <location evidence="3">Cell membrane</location>
        <topology evidence="3">Multi-pass membrane protein</topology>
    </subcellularLocation>
</comment>
<comment type="induction">
    <text evidence="2">Expression is regulated by the XptR regulon. Negatively regulated by hypoxanthine and guanine.</text>
</comment>
<comment type="similarity">
    <text evidence="3">Belongs to the concentrative nucleoside transporter (CNT) (TC 2.A.41) family.</text>
</comment>
<keyword id="KW-1003">Cell membrane</keyword>
<keyword id="KW-0472">Membrane</keyword>
<keyword id="KW-1185">Reference proteome</keyword>
<keyword id="KW-0812">Transmembrane</keyword>
<keyword id="KW-1133">Transmembrane helix</keyword>
<keyword id="KW-0813">Transport</keyword>
<proteinExistence type="evidence at protein level"/>
<feature type="chain" id="PRO_0000070456" description="Purine nucleoside transport protein NupG">
    <location>
        <begin position="1"/>
        <end position="397"/>
    </location>
</feature>
<feature type="transmembrane region" description="Helical" evidence="1">
    <location>
        <begin position="1"/>
        <end position="21"/>
    </location>
</feature>
<feature type="transmembrane region" description="Helical" evidence="1">
    <location>
        <begin position="32"/>
        <end position="52"/>
    </location>
</feature>
<feature type="transmembrane region" description="Helical" evidence="1">
    <location>
        <begin position="62"/>
        <end position="82"/>
    </location>
</feature>
<feature type="transmembrane region" description="Helical" evidence="1">
    <location>
        <begin position="97"/>
        <end position="117"/>
    </location>
</feature>
<feature type="transmembrane region" description="Helical" evidence="1">
    <location>
        <begin position="133"/>
        <end position="153"/>
    </location>
</feature>
<feature type="transmembrane region" description="Helical" evidence="1">
    <location>
        <begin position="165"/>
        <end position="185"/>
    </location>
</feature>
<feature type="transmembrane region" description="Helical" evidence="1">
    <location>
        <begin position="187"/>
        <end position="207"/>
    </location>
</feature>
<feature type="transmembrane region" description="Helical" evidence="1">
    <location>
        <begin position="242"/>
        <end position="262"/>
    </location>
</feature>
<feature type="transmembrane region" description="Helical" evidence="1">
    <location>
        <begin position="282"/>
        <end position="302"/>
    </location>
</feature>
<feature type="transmembrane region" description="Helical" evidence="1">
    <location>
        <begin position="335"/>
        <end position="355"/>
    </location>
</feature>
<feature type="transmembrane region" description="Helical" evidence="1">
    <location>
        <begin position="377"/>
        <end position="397"/>
    </location>
</feature>
<feature type="sequence conflict" description="In Ref. 1; BAA11702." evidence="3" ref="1">
    <original>I</original>
    <variation>N</variation>
    <location>
        <position position="279"/>
    </location>
</feature>
<dbReference type="EMBL" id="D83026">
    <property type="protein sequence ID" value="BAA11702.1"/>
    <property type="molecule type" value="Genomic_DNA"/>
</dbReference>
<dbReference type="EMBL" id="AL009126">
    <property type="protein sequence ID" value="CAB15928.2"/>
    <property type="molecule type" value="Genomic_DNA"/>
</dbReference>
<dbReference type="PIR" id="G70078">
    <property type="entry name" value="G70078"/>
</dbReference>
<dbReference type="RefSeq" id="NP_391781.2">
    <property type="nucleotide sequence ID" value="NC_000964.3"/>
</dbReference>
<dbReference type="RefSeq" id="WP_003227216.1">
    <property type="nucleotide sequence ID" value="NZ_OZ025638.1"/>
</dbReference>
<dbReference type="SMR" id="P42312"/>
<dbReference type="FunCoup" id="P42312">
    <property type="interactions" value="16"/>
</dbReference>
<dbReference type="IntAct" id="P42312">
    <property type="interactions" value="3"/>
</dbReference>
<dbReference type="STRING" id="224308.BSU39020"/>
<dbReference type="TCDB" id="2.A.41.1.3">
    <property type="family name" value="the concentrative nucleoside transporter (cnt) family"/>
</dbReference>
<dbReference type="PaxDb" id="224308-BSU39020"/>
<dbReference type="EnsemblBacteria" id="CAB15928">
    <property type="protein sequence ID" value="CAB15928"/>
    <property type="gene ID" value="BSU_39020"/>
</dbReference>
<dbReference type="GeneID" id="937472"/>
<dbReference type="KEGG" id="bsu:BSU39020"/>
<dbReference type="PATRIC" id="fig|224308.179.peg.4224"/>
<dbReference type="eggNOG" id="COG1972">
    <property type="taxonomic scope" value="Bacteria"/>
</dbReference>
<dbReference type="InParanoid" id="P42312"/>
<dbReference type="OrthoDB" id="9766455at2"/>
<dbReference type="PhylomeDB" id="P42312"/>
<dbReference type="BioCyc" id="BSUB:BSU39020-MONOMER"/>
<dbReference type="Proteomes" id="UP000001570">
    <property type="component" value="Chromosome"/>
</dbReference>
<dbReference type="GO" id="GO:0005886">
    <property type="term" value="C:plasma membrane"/>
    <property type="evidence" value="ECO:0000318"/>
    <property type="project" value="GO_Central"/>
</dbReference>
<dbReference type="GO" id="GO:0005337">
    <property type="term" value="F:nucleoside transmembrane transporter activity"/>
    <property type="evidence" value="ECO:0000318"/>
    <property type="project" value="GO_Central"/>
</dbReference>
<dbReference type="GO" id="GO:0015293">
    <property type="term" value="F:symporter activity"/>
    <property type="evidence" value="ECO:0000318"/>
    <property type="project" value="GO_Central"/>
</dbReference>
<dbReference type="GO" id="GO:1901642">
    <property type="term" value="P:nucleoside transmembrane transport"/>
    <property type="evidence" value="ECO:0000318"/>
    <property type="project" value="GO_Central"/>
</dbReference>
<dbReference type="InterPro" id="IPR008276">
    <property type="entry name" value="C_nuclsd_transpt"/>
</dbReference>
<dbReference type="InterPro" id="IPR018270">
    <property type="entry name" value="C_nuclsd_transpt_met_bac"/>
</dbReference>
<dbReference type="InterPro" id="IPR011657">
    <property type="entry name" value="CNT_C_dom"/>
</dbReference>
<dbReference type="InterPro" id="IPR002668">
    <property type="entry name" value="CNT_N_dom"/>
</dbReference>
<dbReference type="NCBIfam" id="TIGR00804">
    <property type="entry name" value="nupC"/>
    <property type="match status" value="1"/>
</dbReference>
<dbReference type="PANTHER" id="PTHR10590:SF19">
    <property type="entry name" value="PURINE NUCLEOSIDE TRANSPORT PROTEIN NUPG"/>
    <property type="match status" value="1"/>
</dbReference>
<dbReference type="PANTHER" id="PTHR10590">
    <property type="entry name" value="SODIUM/NUCLEOSIDE COTRANSPORTER"/>
    <property type="match status" value="1"/>
</dbReference>
<dbReference type="Pfam" id="PF07662">
    <property type="entry name" value="Nucleos_tra2_C"/>
    <property type="match status" value="1"/>
</dbReference>
<dbReference type="Pfam" id="PF01773">
    <property type="entry name" value="Nucleos_tra2_N"/>
    <property type="match status" value="1"/>
</dbReference>